<dbReference type="EC" id="3.1.1.29" evidence="1"/>
<dbReference type="EMBL" id="BA000018">
    <property type="protein sequence ID" value="BAB41690.1"/>
    <property type="molecule type" value="Genomic_DNA"/>
</dbReference>
<dbReference type="PIR" id="G89816">
    <property type="entry name" value="G89816"/>
</dbReference>
<dbReference type="RefSeq" id="WP_000649791.1">
    <property type="nucleotide sequence ID" value="NC_002745.2"/>
</dbReference>
<dbReference type="SMR" id="P65868"/>
<dbReference type="EnsemblBacteria" id="BAB41690">
    <property type="protein sequence ID" value="BAB41690"/>
    <property type="gene ID" value="BAB41690"/>
</dbReference>
<dbReference type="KEGG" id="sau:SA0460"/>
<dbReference type="HOGENOM" id="CLU_062456_4_1_9"/>
<dbReference type="GO" id="GO:0005737">
    <property type="term" value="C:cytoplasm"/>
    <property type="evidence" value="ECO:0007669"/>
    <property type="project" value="UniProtKB-SubCell"/>
</dbReference>
<dbReference type="GO" id="GO:0004045">
    <property type="term" value="F:peptidyl-tRNA hydrolase activity"/>
    <property type="evidence" value="ECO:0007669"/>
    <property type="project" value="UniProtKB-UniRule"/>
</dbReference>
<dbReference type="GO" id="GO:0000049">
    <property type="term" value="F:tRNA binding"/>
    <property type="evidence" value="ECO:0007669"/>
    <property type="project" value="UniProtKB-UniRule"/>
</dbReference>
<dbReference type="GO" id="GO:0006515">
    <property type="term" value="P:protein quality control for misfolded or incompletely synthesized proteins"/>
    <property type="evidence" value="ECO:0007669"/>
    <property type="project" value="UniProtKB-UniRule"/>
</dbReference>
<dbReference type="GO" id="GO:0072344">
    <property type="term" value="P:rescue of stalled ribosome"/>
    <property type="evidence" value="ECO:0007669"/>
    <property type="project" value="UniProtKB-UniRule"/>
</dbReference>
<dbReference type="CDD" id="cd00462">
    <property type="entry name" value="PTH"/>
    <property type="match status" value="1"/>
</dbReference>
<dbReference type="FunFam" id="3.40.50.1470:FF:000001">
    <property type="entry name" value="Peptidyl-tRNA hydrolase"/>
    <property type="match status" value="1"/>
</dbReference>
<dbReference type="Gene3D" id="3.40.50.1470">
    <property type="entry name" value="Peptidyl-tRNA hydrolase"/>
    <property type="match status" value="1"/>
</dbReference>
<dbReference type="HAMAP" id="MF_00083">
    <property type="entry name" value="Pept_tRNA_hydro_bact"/>
    <property type="match status" value="1"/>
</dbReference>
<dbReference type="InterPro" id="IPR001328">
    <property type="entry name" value="Pept_tRNA_hydro"/>
</dbReference>
<dbReference type="InterPro" id="IPR018171">
    <property type="entry name" value="Pept_tRNA_hydro_CS"/>
</dbReference>
<dbReference type="InterPro" id="IPR036416">
    <property type="entry name" value="Pept_tRNA_hydro_sf"/>
</dbReference>
<dbReference type="NCBIfam" id="TIGR00447">
    <property type="entry name" value="pth"/>
    <property type="match status" value="1"/>
</dbReference>
<dbReference type="PANTHER" id="PTHR17224">
    <property type="entry name" value="PEPTIDYL-TRNA HYDROLASE"/>
    <property type="match status" value="1"/>
</dbReference>
<dbReference type="PANTHER" id="PTHR17224:SF1">
    <property type="entry name" value="PEPTIDYL-TRNA HYDROLASE"/>
    <property type="match status" value="1"/>
</dbReference>
<dbReference type="Pfam" id="PF01195">
    <property type="entry name" value="Pept_tRNA_hydro"/>
    <property type="match status" value="1"/>
</dbReference>
<dbReference type="SUPFAM" id="SSF53178">
    <property type="entry name" value="Peptidyl-tRNA hydrolase-like"/>
    <property type="match status" value="1"/>
</dbReference>
<dbReference type="PROSITE" id="PS01195">
    <property type="entry name" value="PEPT_TRNA_HYDROL_1"/>
    <property type="match status" value="1"/>
</dbReference>
<dbReference type="PROSITE" id="PS01196">
    <property type="entry name" value="PEPT_TRNA_HYDROL_2"/>
    <property type="match status" value="1"/>
</dbReference>
<protein>
    <recommendedName>
        <fullName evidence="1">Peptidyl-tRNA hydrolase</fullName>
        <shortName evidence="1">Pth</shortName>
        <ecNumber evidence="1">3.1.1.29</ecNumber>
    </recommendedName>
</protein>
<organism>
    <name type="scientific">Staphylococcus aureus (strain N315)</name>
    <dbReference type="NCBI Taxonomy" id="158879"/>
    <lineage>
        <taxon>Bacteria</taxon>
        <taxon>Bacillati</taxon>
        <taxon>Bacillota</taxon>
        <taxon>Bacilli</taxon>
        <taxon>Bacillales</taxon>
        <taxon>Staphylococcaceae</taxon>
        <taxon>Staphylococcus</taxon>
    </lineage>
</organism>
<name>PTH_STAAN</name>
<proteinExistence type="inferred from homology"/>
<feature type="chain" id="PRO_0000187816" description="Peptidyl-tRNA hydrolase">
    <location>
        <begin position="1"/>
        <end position="190"/>
    </location>
</feature>
<feature type="active site" description="Proton acceptor" evidence="1">
    <location>
        <position position="19"/>
    </location>
</feature>
<feature type="binding site" evidence="1">
    <location>
        <position position="14"/>
    </location>
    <ligand>
        <name>tRNA</name>
        <dbReference type="ChEBI" id="CHEBI:17843"/>
    </ligand>
</feature>
<feature type="binding site" evidence="1">
    <location>
        <position position="64"/>
    </location>
    <ligand>
        <name>tRNA</name>
        <dbReference type="ChEBI" id="CHEBI:17843"/>
    </ligand>
</feature>
<feature type="binding site" evidence="1">
    <location>
        <position position="66"/>
    </location>
    <ligand>
        <name>tRNA</name>
        <dbReference type="ChEBI" id="CHEBI:17843"/>
    </ligand>
</feature>
<feature type="binding site" evidence="1">
    <location>
        <position position="112"/>
    </location>
    <ligand>
        <name>tRNA</name>
        <dbReference type="ChEBI" id="CHEBI:17843"/>
    </ligand>
</feature>
<feature type="site" description="Discriminates between blocked and unblocked aminoacyl-tRNA" evidence="1">
    <location>
        <position position="9"/>
    </location>
</feature>
<feature type="site" description="Stabilizes the basic form of H active site to accept a proton" evidence="1">
    <location>
        <position position="91"/>
    </location>
</feature>
<gene>
    <name evidence="1" type="primary">pth</name>
    <name type="ordered locus">SA0460</name>
</gene>
<sequence length="190" mass="21703">MKCIVGLGNIGKRFELTRHNIGFEVVDYILEKNNFSLDKQKFKGAYTIERMNGDKVLFIEPMTMMNLSGEAVAPIMDYYNVNPEDLIVLYDDLDLEQGQVRLRQKGSAGGHNGMKSIIKMLGTDQFKRIRIGVGRPTNGMTVPDYVLQRFSNDEMVTMEKVIEHAARAIEKFVETSRFDHVMNEFNGEVK</sequence>
<accession>P65868</accession>
<accession>Q99WA1</accession>
<evidence type="ECO:0000255" key="1">
    <source>
        <dbReference type="HAMAP-Rule" id="MF_00083"/>
    </source>
</evidence>
<keyword id="KW-0963">Cytoplasm</keyword>
<keyword id="KW-0378">Hydrolase</keyword>
<keyword id="KW-0694">RNA-binding</keyword>
<keyword id="KW-0820">tRNA-binding</keyword>
<comment type="function">
    <text evidence="1">Hydrolyzes ribosome-free peptidyl-tRNAs (with 1 or more amino acids incorporated), which drop off the ribosome during protein synthesis, or as a result of ribosome stalling.</text>
</comment>
<comment type="function">
    <text evidence="1">Catalyzes the release of premature peptidyl moieties from peptidyl-tRNA molecules trapped in stalled 50S ribosomal subunits, and thus maintains levels of free tRNAs and 50S ribosomes.</text>
</comment>
<comment type="catalytic activity">
    <reaction evidence="1">
        <text>an N-acyl-L-alpha-aminoacyl-tRNA + H2O = an N-acyl-L-amino acid + a tRNA + H(+)</text>
        <dbReference type="Rhea" id="RHEA:54448"/>
        <dbReference type="Rhea" id="RHEA-COMP:10123"/>
        <dbReference type="Rhea" id="RHEA-COMP:13883"/>
        <dbReference type="ChEBI" id="CHEBI:15377"/>
        <dbReference type="ChEBI" id="CHEBI:15378"/>
        <dbReference type="ChEBI" id="CHEBI:59874"/>
        <dbReference type="ChEBI" id="CHEBI:78442"/>
        <dbReference type="ChEBI" id="CHEBI:138191"/>
        <dbReference type="EC" id="3.1.1.29"/>
    </reaction>
</comment>
<comment type="subunit">
    <text evidence="1">Monomer.</text>
</comment>
<comment type="subcellular location">
    <subcellularLocation>
        <location evidence="1">Cytoplasm</location>
    </subcellularLocation>
</comment>
<comment type="similarity">
    <text evidence="1">Belongs to the PTH family.</text>
</comment>
<reference key="1">
    <citation type="journal article" date="2001" name="Lancet">
        <title>Whole genome sequencing of meticillin-resistant Staphylococcus aureus.</title>
        <authorList>
            <person name="Kuroda M."/>
            <person name="Ohta T."/>
            <person name="Uchiyama I."/>
            <person name="Baba T."/>
            <person name="Yuzawa H."/>
            <person name="Kobayashi I."/>
            <person name="Cui L."/>
            <person name="Oguchi A."/>
            <person name="Aoki K."/>
            <person name="Nagai Y."/>
            <person name="Lian J.-Q."/>
            <person name="Ito T."/>
            <person name="Kanamori M."/>
            <person name="Matsumaru H."/>
            <person name="Maruyama A."/>
            <person name="Murakami H."/>
            <person name="Hosoyama A."/>
            <person name="Mizutani-Ui Y."/>
            <person name="Takahashi N.K."/>
            <person name="Sawano T."/>
            <person name="Inoue R."/>
            <person name="Kaito C."/>
            <person name="Sekimizu K."/>
            <person name="Hirakawa H."/>
            <person name="Kuhara S."/>
            <person name="Goto S."/>
            <person name="Yabuzaki J."/>
            <person name="Kanehisa M."/>
            <person name="Yamashita A."/>
            <person name="Oshima K."/>
            <person name="Furuya K."/>
            <person name="Yoshino C."/>
            <person name="Shiba T."/>
            <person name="Hattori M."/>
            <person name="Ogasawara N."/>
            <person name="Hayashi H."/>
            <person name="Hiramatsu K."/>
        </authorList>
    </citation>
    <scope>NUCLEOTIDE SEQUENCE [LARGE SCALE GENOMIC DNA]</scope>
    <source>
        <strain>N315</strain>
    </source>
</reference>